<gene>
    <name evidence="1" type="primary">atpB</name>
    <name type="ordered locus">Z5236</name>
    <name type="ordered locus">ECs4680</name>
</gene>
<protein>
    <recommendedName>
        <fullName evidence="1">ATP synthase subunit a</fullName>
    </recommendedName>
    <alternativeName>
        <fullName evidence="1">ATP synthase F0 sector subunit a</fullName>
    </alternativeName>
    <alternativeName>
        <fullName evidence="1">F-ATPase subunit 6</fullName>
    </alternativeName>
</protein>
<name>ATP6_ECO57</name>
<organism>
    <name type="scientific">Escherichia coli O157:H7</name>
    <dbReference type="NCBI Taxonomy" id="83334"/>
    <lineage>
        <taxon>Bacteria</taxon>
        <taxon>Pseudomonadati</taxon>
        <taxon>Pseudomonadota</taxon>
        <taxon>Gammaproteobacteria</taxon>
        <taxon>Enterobacterales</taxon>
        <taxon>Enterobacteriaceae</taxon>
        <taxon>Escherichia</taxon>
    </lineage>
</organism>
<dbReference type="EMBL" id="AE005174">
    <property type="protein sequence ID" value="AAG58941.1"/>
    <property type="molecule type" value="Genomic_DNA"/>
</dbReference>
<dbReference type="EMBL" id="BA000007">
    <property type="protein sequence ID" value="BAB38103.1"/>
    <property type="molecule type" value="Genomic_DNA"/>
</dbReference>
<dbReference type="PIR" id="A86060">
    <property type="entry name" value="A86060"/>
</dbReference>
<dbReference type="PIR" id="H91213">
    <property type="entry name" value="H91213"/>
</dbReference>
<dbReference type="RefSeq" id="NP_312707.1">
    <property type="nucleotide sequence ID" value="NC_002695.1"/>
</dbReference>
<dbReference type="RefSeq" id="WP_000135625.1">
    <property type="nucleotide sequence ID" value="NZ_VOAI01000011.1"/>
</dbReference>
<dbReference type="SMR" id="P0AB99"/>
<dbReference type="STRING" id="155864.Z5236"/>
<dbReference type="GeneID" id="915337"/>
<dbReference type="GeneID" id="93778229"/>
<dbReference type="KEGG" id="ece:Z5236"/>
<dbReference type="KEGG" id="ecs:ECs_4680"/>
<dbReference type="PATRIC" id="fig|386585.9.peg.4885"/>
<dbReference type="eggNOG" id="COG0356">
    <property type="taxonomic scope" value="Bacteria"/>
</dbReference>
<dbReference type="HOGENOM" id="CLU_041018_1_0_6"/>
<dbReference type="OMA" id="GFFWAAF"/>
<dbReference type="Proteomes" id="UP000000558">
    <property type="component" value="Chromosome"/>
</dbReference>
<dbReference type="Proteomes" id="UP000002519">
    <property type="component" value="Chromosome"/>
</dbReference>
<dbReference type="GO" id="GO:0005886">
    <property type="term" value="C:plasma membrane"/>
    <property type="evidence" value="ECO:0007669"/>
    <property type="project" value="UniProtKB-SubCell"/>
</dbReference>
<dbReference type="GO" id="GO:0045259">
    <property type="term" value="C:proton-transporting ATP synthase complex"/>
    <property type="evidence" value="ECO:0007669"/>
    <property type="project" value="UniProtKB-KW"/>
</dbReference>
<dbReference type="GO" id="GO:0046933">
    <property type="term" value="F:proton-transporting ATP synthase activity, rotational mechanism"/>
    <property type="evidence" value="ECO:0007669"/>
    <property type="project" value="UniProtKB-UniRule"/>
</dbReference>
<dbReference type="GO" id="GO:0042777">
    <property type="term" value="P:proton motive force-driven plasma membrane ATP synthesis"/>
    <property type="evidence" value="ECO:0007669"/>
    <property type="project" value="TreeGrafter"/>
</dbReference>
<dbReference type="CDD" id="cd00310">
    <property type="entry name" value="ATP-synt_Fo_a_6"/>
    <property type="match status" value="1"/>
</dbReference>
<dbReference type="FunFam" id="1.20.120.220:FF:000002">
    <property type="entry name" value="ATP synthase subunit a"/>
    <property type="match status" value="1"/>
</dbReference>
<dbReference type="Gene3D" id="1.20.120.220">
    <property type="entry name" value="ATP synthase, F0 complex, subunit A"/>
    <property type="match status" value="1"/>
</dbReference>
<dbReference type="HAMAP" id="MF_01393">
    <property type="entry name" value="ATP_synth_a_bact"/>
    <property type="match status" value="1"/>
</dbReference>
<dbReference type="InterPro" id="IPR045082">
    <property type="entry name" value="ATP_syn_F0_a_bact/chloroplast"/>
</dbReference>
<dbReference type="InterPro" id="IPR000568">
    <property type="entry name" value="ATP_synth_F0_asu"/>
</dbReference>
<dbReference type="InterPro" id="IPR023011">
    <property type="entry name" value="ATP_synth_F0_asu_AS"/>
</dbReference>
<dbReference type="InterPro" id="IPR035908">
    <property type="entry name" value="F0_ATP_A_sf"/>
</dbReference>
<dbReference type="NCBIfam" id="TIGR01131">
    <property type="entry name" value="ATP_synt_6_or_A"/>
    <property type="match status" value="1"/>
</dbReference>
<dbReference type="NCBIfam" id="NF004477">
    <property type="entry name" value="PRK05815.1-1"/>
    <property type="match status" value="1"/>
</dbReference>
<dbReference type="PANTHER" id="PTHR42823">
    <property type="entry name" value="ATP SYNTHASE SUBUNIT A, CHLOROPLASTIC"/>
    <property type="match status" value="1"/>
</dbReference>
<dbReference type="PANTHER" id="PTHR42823:SF3">
    <property type="entry name" value="ATP SYNTHASE SUBUNIT A, CHLOROPLASTIC"/>
    <property type="match status" value="1"/>
</dbReference>
<dbReference type="Pfam" id="PF00119">
    <property type="entry name" value="ATP-synt_A"/>
    <property type="match status" value="1"/>
</dbReference>
<dbReference type="PRINTS" id="PR00123">
    <property type="entry name" value="ATPASEA"/>
</dbReference>
<dbReference type="SUPFAM" id="SSF81336">
    <property type="entry name" value="F1F0 ATP synthase subunit A"/>
    <property type="match status" value="1"/>
</dbReference>
<dbReference type="PROSITE" id="PS00449">
    <property type="entry name" value="ATPASE_A"/>
    <property type="match status" value="1"/>
</dbReference>
<keyword id="KW-0066">ATP synthesis</keyword>
<keyword id="KW-0997">Cell inner membrane</keyword>
<keyword id="KW-1003">Cell membrane</keyword>
<keyword id="KW-0138">CF(0)</keyword>
<keyword id="KW-0375">Hydrogen ion transport</keyword>
<keyword id="KW-0406">Ion transport</keyword>
<keyword id="KW-0472">Membrane</keyword>
<keyword id="KW-1185">Reference proteome</keyword>
<keyword id="KW-0812">Transmembrane</keyword>
<keyword id="KW-1133">Transmembrane helix</keyword>
<keyword id="KW-0813">Transport</keyword>
<accession>P0AB99</accession>
<accession>P00855</accession>
<accession>Q47708</accession>
<reference key="1">
    <citation type="journal article" date="2001" name="Nature">
        <title>Genome sequence of enterohaemorrhagic Escherichia coli O157:H7.</title>
        <authorList>
            <person name="Perna N.T."/>
            <person name="Plunkett G. III"/>
            <person name="Burland V."/>
            <person name="Mau B."/>
            <person name="Glasner J.D."/>
            <person name="Rose D.J."/>
            <person name="Mayhew G.F."/>
            <person name="Evans P.S."/>
            <person name="Gregor J."/>
            <person name="Kirkpatrick H.A."/>
            <person name="Posfai G."/>
            <person name="Hackett J."/>
            <person name="Klink S."/>
            <person name="Boutin A."/>
            <person name="Shao Y."/>
            <person name="Miller L."/>
            <person name="Grotbeck E.J."/>
            <person name="Davis N.W."/>
            <person name="Lim A."/>
            <person name="Dimalanta E.T."/>
            <person name="Potamousis K."/>
            <person name="Apodaca J."/>
            <person name="Anantharaman T.S."/>
            <person name="Lin J."/>
            <person name="Yen G."/>
            <person name="Schwartz D.C."/>
            <person name="Welch R.A."/>
            <person name="Blattner F.R."/>
        </authorList>
    </citation>
    <scope>NUCLEOTIDE SEQUENCE [LARGE SCALE GENOMIC DNA]</scope>
    <source>
        <strain>O157:H7 / EDL933 / ATCC 700927 / EHEC</strain>
    </source>
</reference>
<reference key="2">
    <citation type="journal article" date="2001" name="DNA Res.">
        <title>Complete genome sequence of enterohemorrhagic Escherichia coli O157:H7 and genomic comparison with a laboratory strain K-12.</title>
        <authorList>
            <person name="Hayashi T."/>
            <person name="Makino K."/>
            <person name="Ohnishi M."/>
            <person name="Kurokawa K."/>
            <person name="Ishii K."/>
            <person name="Yokoyama K."/>
            <person name="Han C.-G."/>
            <person name="Ohtsubo E."/>
            <person name="Nakayama K."/>
            <person name="Murata T."/>
            <person name="Tanaka M."/>
            <person name="Tobe T."/>
            <person name="Iida T."/>
            <person name="Takami H."/>
            <person name="Honda T."/>
            <person name="Sasakawa C."/>
            <person name="Ogasawara N."/>
            <person name="Yasunaga T."/>
            <person name="Kuhara S."/>
            <person name="Shiba T."/>
            <person name="Hattori M."/>
            <person name="Shinagawa H."/>
        </authorList>
    </citation>
    <scope>NUCLEOTIDE SEQUENCE [LARGE SCALE GENOMIC DNA]</scope>
    <source>
        <strain>O157:H7 / Sakai / RIMD 0509952 / EHEC</strain>
    </source>
</reference>
<feature type="chain" id="PRO_0000082054" description="ATP synthase subunit a">
    <location>
        <begin position="1"/>
        <end position="271"/>
    </location>
</feature>
<feature type="transmembrane region" description="Helical" evidence="1">
    <location>
        <begin position="40"/>
        <end position="60"/>
    </location>
</feature>
<feature type="transmembrane region" description="Helical" evidence="1">
    <location>
        <begin position="100"/>
        <end position="120"/>
    </location>
</feature>
<feature type="transmembrane region" description="Helical" evidence="1">
    <location>
        <begin position="146"/>
        <end position="166"/>
    </location>
</feature>
<feature type="transmembrane region" description="Helical" evidence="1">
    <location>
        <begin position="220"/>
        <end position="240"/>
    </location>
</feature>
<feature type="transmembrane region" description="Helical" evidence="1">
    <location>
        <begin position="242"/>
        <end position="262"/>
    </location>
</feature>
<feature type="sequence conflict" description="In Ref. 2; BAB38103." evidence="2" ref="2">
    <original>V</original>
    <variation>G</variation>
    <location>
        <position position="258"/>
    </location>
</feature>
<evidence type="ECO:0000255" key="1">
    <source>
        <dbReference type="HAMAP-Rule" id="MF_01393"/>
    </source>
</evidence>
<evidence type="ECO:0000305" key="2"/>
<sequence length="271" mass="30303">MASENMTPQDYIGHHLNNLQLDLRTFSLVDPQNPPATFWTINIDSMFFSVVLGLLFLVLFRSVAKKATSGVPGKFQTAIELVIGFVNGSVKDMYHGKSKLIAPLALTIFVWVFLMNLMDLLPIDLLPYIAEHVLGLPALRVVPSADVNVTLSMALGVFILILFYSIKMKGIGGFTKELTLQPFNHWAFIPVNLILEGVSLLSKPVSLGLRLFGNMYAGELIFILIAGLLPWWSQWILNVPWAIFHILIITLQAFIFMVLTIVYLSMASEEH</sequence>
<comment type="function">
    <text evidence="1">Key component of the proton channel; it plays a direct role in the translocation of protons across the membrane.</text>
</comment>
<comment type="subunit">
    <text evidence="1">F-type ATPases have 2 components, CF(1) - the catalytic core - and CF(0) - the membrane proton channel. CF(1) has five subunits: alpha(3), beta(3), gamma(1), delta(1), epsilon(1). CF(0) has three main subunits: a(1), b(2) and c(9-12). The alpha and beta chains form an alternating ring which encloses part of the gamma chain. CF(1) is attached to CF(0) by a central stalk formed by the gamma and epsilon chains, while a peripheral stalk is formed by the delta and b chains.</text>
</comment>
<comment type="subcellular location">
    <subcellularLocation>
        <location evidence="1">Cell inner membrane</location>
        <topology evidence="1">Multi-pass membrane protein</topology>
    </subcellularLocation>
</comment>
<comment type="similarity">
    <text evidence="1">Belongs to the ATPase A chain family.</text>
</comment>
<proteinExistence type="inferred from homology"/>